<sequence>MATQTIEGSSRSGPRRTIVGDLLKPLNSEYGKVAPGWGTTPLMGVAMALFAVFLSIILEIYNSSVLLDGISLS</sequence>
<keyword id="KW-0150">Chloroplast</keyword>
<keyword id="KW-0472">Membrane</keyword>
<keyword id="KW-0597">Phosphoprotein</keyword>
<keyword id="KW-0602">Photosynthesis</keyword>
<keyword id="KW-0604">Photosystem II</keyword>
<keyword id="KW-0934">Plastid</keyword>
<keyword id="KW-0793">Thylakoid</keyword>
<keyword id="KW-0812">Transmembrane</keyword>
<keyword id="KW-1133">Transmembrane helix</keyword>
<organism>
    <name type="scientific">Nymphaea alba</name>
    <name type="common">White water-lily</name>
    <name type="synonym">Castalia alba</name>
    <dbReference type="NCBI Taxonomy" id="34301"/>
    <lineage>
        <taxon>Eukaryota</taxon>
        <taxon>Viridiplantae</taxon>
        <taxon>Streptophyta</taxon>
        <taxon>Embryophyta</taxon>
        <taxon>Tracheophyta</taxon>
        <taxon>Spermatophyta</taxon>
        <taxon>Magnoliopsida</taxon>
        <taxon>Nymphaeales</taxon>
        <taxon>Nymphaeaceae</taxon>
        <taxon>Nymphaea</taxon>
    </lineage>
</organism>
<protein>
    <recommendedName>
        <fullName evidence="2">Photosystem II reaction center protein H</fullName>
        <shortName evidence="2">PSII-H</shortName>
    </recommendedName>
    <alternativeName>
        <fullName evidence="2">Photosystem II 10 kDa phosphoprotein</fullName>
    </alternativeName>
</protein>
<reference key="1">
    <citation type="journal article" date="2004" name="Mol. Biol. Evol.">
        <title>The chloroplast genome of Nymphaea alba: whole-genome analyses and the problem of identifying the most basal angiosperm.</title>
        <authorList>
            <person name="Goremykin V.V."/>
            <person name="Hirsch-Ernst K.I."/>
            <person name="Woelfl S."/>
            <person name="Hellwig F.H."/>
        </authorList>
    </citation>
    <scope>NUCLEOTIDE SEQUENCE [LARGE SCALE GENOMIC DNA]</scope>
</reference>
<accession>Q6EW23</accession>
<geneLocation type="chloroplast"/>
<gene>
    <name evidence="2" type="primary">psbH</name>
</gene>
<dbReference type="EMBL" id="AJ627251">
    <property type="protein sequence ID" value="CAF28623.1"/>
    <property type="status" value="ALT_INIT"/>
    <property type="molecule type" value="Genomic_DNA"/>
</dbReference>
<dbReference type="RefSeq" id="YP_053183.2">
    <property type="nucleotide sequence ID" value="NC_006050.1"/>
</dbReference>
<dbReference type="SMR" id="Q6EW23"/>
<dbReference type="GeneID" id="2896268"/>
<dbReference type="GO" id="GO:0009535">
    <property type="term" value="C:chloroplast thylakoid membrane"/>
    <property type="evidence" value="ECO:0007669"/>
    <property type="project" value="UniProtKB-SubCell"/>
</dbReference>
<dbReference type="GO" id="GO:0009523">
    <property type="term" value="C:photosystem II"/>
    <property type="evidence" value="ECO:0007669"/>
    <property type="project" value="UniProtKB-KW"/>
</dbReference>
<dbReference type="GO" id="GO:0042301">
    <property type="term" value="F:phosphate ion binding"/>
    <property type="evidence" value="ECO:0007669"/>
    <property type="project" value="InterPro"/>
</dbReference>
<dbReference type="GO" id="GO:0015979">
    <property type="term" value="P:photosynthesis"/>
    <property type="evidence" value="ECO:0007669"/>
    <property type="project" value="UniProtKB-UniRule"/>
</dbReference>
<dbReference type="GO" id="GO:0050821">
    <property type="term" value="P:protein stabilization"/>
    <property type="evidence" value="ECO:0007669"/>
    <property type="project" value="InterPro"/>
</dbReference>
<dbReference type="FunFam" id="1.20.5.880:FF:000001">
    <property type="entry name" value="Photosystem II reaction center protein H"/>
    <property type="match status" value="1"/>
</dbReference>
<dbReference type="Gene3D" id="1.20.5.880">
    <property type="entry name" value="Photosystem II reaction center protein H"/>
    <property type="match status" value="1"/>
</dbReference>
<dbReference type="HAMAP" id="MF_00752">
    <property type="entry name" value="PSII_PsbH"/>
    <property type="match status" value="1"/>
</dbReference>
<dbReference type="InterPro" id="IPR001056">
    <property type="entry name" value="PSII_PsbH"/>
</dbReference>
<dbReference type="InterPro" id="IPR036863">
    <property type="entry name" value="PSII_PsbH_sf"/>
</dbReference>
<dbReference type="NCBIfam" id="NF002728">
    <property type="entry name" value="PRK02624.1"/>
    <property type="match status" value="1"/>
</dbReference>
<dbReference type="PANTHER" id="PTHR34469">
    <property type="entry name" value="PHOTOSYSTEM II REACTION CENTER PROTEIN H"/>
    <property type="match status" value="1"/>
</dbReference>
<dbReference type="PANTHER" id="PTHR34469:SF4">
    <property type="entry name" value="PHOTOSYSTEM II REACTION CENTER PROTEIN H"/>
    <property type="match status" value="1"/>
</dbReference>
<dbReference type="Pfam" id="PF00737">
    <property type="entry name" value="PsbH"/>
    <property type="match status" value="1"/>
</dbReference>
<dbReference type="SUPFAM" id="SSF161025">
    <property type="entry name" value="Photosystem II 10 kDa phosphoprotein PsbH"/>
    <property type="match status" value="1"/>
</dbReference>
<comment type="function">
    <text evidence="2">One of the components of the core complex of photosystem II (PSII), required for its stability and/or assembly. PSII is a light-driven water:plastoquinone oxidoreductase that uses light energy to abstract electrons from H(2)O, generating O(2) and a proton gradient subsequently used for ATP formation. It consists of a core antenna complex that captures photons, and an electron transfer chain that converts photonic excitation into a charge separation.</text>
</comment>
<comment type="subunit">
    <text evidence="2">PSII is composed of 1 copy each of membrane proteins PsbA, PsbB, PsbC, PsbD, PsbE, PsbF, PsbH, PsbI, PsbJ, PsbK, PsbL, PsbM, PsbT, PsbX, PsbY, PsbZ, Psb30/Ycf12, at least 3 peripheral proteins of the oxygen-evolving complex and a large number of cofactors. It forms dimeric complexes.</text>
</comment>
<comment type="subcellular location">
    <subcellularLocation>
        <location evidence="2">Plastid</location>
        <location evidence="2">Chloroplast thylakoid membrane</location>
        <topology evidence="2">Single-pass membrane protein</topology>
    </subcellularLocation>
</comment>
<comment type="PTM">
    <text evidence="2">Phosphorylation is a light-dependent reaction catalyzed by a membrane-bound kinase; phosphorylation occurs on Thr residue(s) in the N-terminus of the protein.</text>
</comment>
<comment type="similarity">
    <text evidence="2">Belongs to the PsbH family.</text>
</comment>
<comment type="sequence caution" evidence="3">
    <conflict type="erroneous initiation">
        <sequence resource="EMBL-CDS" id="CAF28623"/>
    </conflict>
    <text>Extended N-terminus.</text>
</comment>
<evidence type="ECO:0000250" key="1">
    <source>
        <dbReference type="UniProtKB" id="P56780"/>
    </source>
</evidence>
<evidence type="ECO:0000255" key="2">
    <source>
        <dbReference type="HAMAP-Rule" id="MF_00752"/>
    </source>
</evidence>
<evidence type="ECO:0000305" key="3"/>
<name>PSBH_NYMAL</name>
<proteinExistence type="inferred from homology"/>
<feature type="initiator methionine" description="Removed" evidence="1">
    <location>
        <position position="1"/>
    </location>
</feature>
<feature type="chain" id="PRO_0000070519" description="Photosystem II reaction center protein H">
    <location>
        <begin position="2"/>
        <end position="73"/>
    </location>
</feature>
<feature type="transmembrane region" description="Helical" evidence="2">
    <location>
        <begin position="41"/>
        <end position="61"/>
    </location>
</feature>
<feature type="modified residue" description="Phosphothreonine" evidence="2">
    <location>
        <position position="3"/>
    </location>
</feature>
<feature type="modified residue" description="Phosphothreonine" evidence="2">
    <location>
        <position position="5"/>
    </location>
</feature>